<gene>
    <name type="ordered locus">MJ1308</name>
</gene>
<keyword id="KW-1003">Cell membrane</keyword>
<keyword id="KW-0472">Membrane</keyword>
<keyword id="KW-1185">Reference proteome</keyword>
<keyword id="KW-0812">Transmembrane</keyword>
<keyword id="KW-1133">Transmembrane helix</keyword>
<name>Y1308_METJA</name>
<reference key="1">
    <citation type="journal article" date="1996" name="Science">
        <title>Complete genome sequence of the methanogenic archaeon, Methanococcus jannaschii.</title>
        <authorList>
            <person name="Bult C.J."/>
            <person name="White O."/>
            <person name="Olsen G.J."/>
            <person name="Zhou L."/>
            <person name="Fleischmann R.D."/>
            <person name="Sutton G.G."/>
            <person name="Blake J.A."/>
            <person name="FitzGerald L.M."/>
            <person name="Clayton R.A."/>
            <person name="Gocayne J.D."/>
            <person name="Kerlavage A.R."/>
            <person name="Dougherty B.A."/>
            <person name="Tomb J.-F."/>
            <person name="Adams M.D."/>
            <person name="Reich C.I."/>
            <person name="Overbeek R."/>
            <person name="Kirkness E.F."/>
            <person name="Weinstock K.G."/>
            <person name="Merrick J.M."/>
            <person name="Glodek A."/>
            <person name="Scott J.L."/>
            <person name="Geoghagen N.S.M."/>
            <person name="Weidman J.F."/>
            <person name="Fuhrmann J.L."/>
            <person name="Nguyen D."/>
            <person name="Utterback T.R."/>
            <person name="Kelley J.M."/>
            <person name="Peterson J.D."/>
            <person name="Sadow P.W."/>
            <person name="Hanna M.C."/>
            <person name="Cotton M.D."/>
            <person name="Roberts K.M."/>
            <person name="Hurst M.A."/>
            <person name="Kaine B.P."/>
            <person name="Borodovsky M."/>
            <person name="Klenk H.-P."/>
            <person name="Fraser C.M."/>
            <person name="Smith H.O."/>
            <person name="Woese C.R."/>
            <person name="Venter J.C."/>
        </authorList>
    </citation>
    <scope>NUCLEOTIDE SEQUENCE [LARGE SCALE GENOMIC DNA]</scope>
    <source>
        <strain>ATCC 43067 / DSM 2661 / JAL-1 / JCM 10045 / NBRC 100440</strain>
    </source>
</reference>
<organism>
    <name type="scientific">Methanocaldococcus jannaschii (strain ATCC 43067 / DSM 2661 / JAL-1 / JCM 10045 / NBRC 100440)</name>
    <name type="common">Methanococcus jannaschii</name>
    <dbReference type="NCBI Taxonomy" id="243232"/>
    <lineage>
        <taxon>Archaea</taxon>
        <taxon>Methanobacteriati</taxon>
        <taxon>Methanobacteriota</taxon>
        <taxon>Methanomada group</taxon>
        <taxon>Methanococci</taxon>
        <taxon>Methanococcales</taxon>
        <taxon>Methanocaldococcaceae</taxon>
        <taxon>Methanocaldococcus</taxon>
    </lineage>
</organism>
<comment type="subcellular location">
    <subcellularLocation>
        <location evidence="2">Cell membrane</location>
        <topology evidence="2">Multi-pass membrane protein</topology>
    </subcellularLocation>
</comment>
<dbReference type="EMBL" id="L77117">
    <property type="protein sequence ID" value="AAB99328.1"/>
    <property type="molecule type" value="Genomic_DNA"/>
</dbReference>
<dbReference type="PIR" id="C64463">
    <property type="entry name" value="C64463"/>
</dbReference>
<dbReference type="FunCoup" id="Q58704">
    <property type="interactions" value="4"/>
</dbReference>
<dbReference type="STRING" id="243232.MJ_1308"/>
<dbReference type="PaxDb" id="243232-MJ_1308"/>
<dbReference type="EnsemblBacteria" id="AAB99328">
    <property type="protein sequence ID" value="AAB99328"/>
    <property type="gene ID" value="MJ_1308"/>
</dbReference>
<dbReference type="KEGG" id="mja:MJ_1308"/>
<dbReference type="eggNOG" id="arCOG05076">
    <property type="taxonomic scope" value="Archaea"/>
</dbReference>
<dbReference type="HOGENOM" id="CLU_2271061_0_0_2"/>
<dbReference type="InParanoid" id="Q58704"/>
<dbReference type="Proteomes" id="UP000000805">
    <property type="component" value="Chromosome"/>
</dbReference>
<dbReference type="GO" id="GO:0005886">
    <property type="term" value="C:plasma membrane"/>
    <property type="evidence" value="ECO:0007669"/>
    <property type="project" value="UniProtKB-SubCell"/>
</dbReference>
<feature type="chain" id="PRO_0000107266" description="Uncharacterized protein MJ1308">
    <location>
        <begin position="1"/>
        <end position="108"/>
    </location>
</feature>
<feature type="transmembrane region" description="Helical" evidence="1">
    <location>
        <begin position="26"/>
        <end position="46"/>
    </location>
</feature>
<feature type="transmembrane region" description="Helical" evidence="1">
    <location>
        <begin position="54"/>
        <end position="74"/>
    </location>
</feature>
<feature type="transmembrane region" description="Helical" evidence="1">
    <location>
        <begin position="84"/>
        <end position="104"/>
    </location>
</feature>
<proteinExistence type="predicted"/>
<protein>
    <recommendedName>
        <fullName>Uncharacterized protein MJ1308</fullName>
    </recommendedName>
</protein>
<evidence type="ECO:0000255" key="1"/>
<evidence type="ECO:0000305" key="2"/>
<sequence length="108" mass="12336">MVDFMDYNDFQKKLDKEEHGDGITVGAVYTGEFTLYLLFIFGALIIGRVYGKTLMTLFGLAALAFSLSVSPLIFKFKEENSNAINYQLFWLSIFLGAIAFCIYMTTRW</sequence>
<accession>Q58704</accession>